<dbReference type="EMBL" id="AF462308">
    <property type="protein sequence ID" value="AAO26744.1"/>
    <property type="molecule type" value="mRNA"/>
</dbReference>
<dbReference type="EMBL" id="AF155367">
    <property type="protein sequence ID" value="AAK61817.1"/>
    <property type="molecule type" value="mRNA"/>
</dbReference>
<dbReference type="SMR" id="Q86RQ7"/>
<dbReference type="GO" id="GO:0005576">
    <property type="term" value="C:extracellular region"/>
    <property type="evidence" value="ECO:0007669"/>
    <property type="project" value="UniProtKB-SubCell"/>
</dbReference>
<dbReference type="GO" id="GO:0004867">
    <property type="term" value="F:serine-type endopeptidase inhibitor activity"/>
    <property type="evidence" value="ECO:0007669"/>
    <property type="project" value="UniProtKB-KW"/>
</dbReference>
<dbReference type="CDD" id="cd19941">
    <property type="entry name" value="TIL"/>
    <property type="match status" value="1"/>
</dbReference>
<dbReference type="Gene3D" id="2.10.25.10">
    <property type="entry name" value="Laminin"/>
    <property type="match status" value="1"/>
</dbReference>
<dbReference type="InterPro" id="IPR036084">
    <property type="entry name" value="Ser_inhib-like_sf"/>
</dbReference>
<dbReference type="InterPro" id="IPR002919">
    <property type="entry name" value="TIL_dom"/>
</dbReference>
<dbReference type="Pfam" id="PF01826">
    <property type="entry name" value="TIL"/>
    <property type="match status" value="1"/>
</dbReference>
<dbReference type="SUPFAM" id="SSF57567">
    <property type="entry name" value="Serine protease inhibitors"/>
    <property type="match status" value="1"/>
</dbReference>
<name>TILI_OLIMR</name>
<proteinExistence type="inferred from homology"/>
<evidence type="ECO:0000250" key="1"/>
<evidence type="ECO:0000250" key="2">
    <source>
        <dbReference type="UniProtKB" id="P07851"/>
    </source>
</evidence>
<evidence type="ECO:0000255" key="3"/>
<evidence type="ECO:0000303" key="4">
    <source>
    </source>
</evidence>
<evidence type="ECO:0000305" key="5"/>
<evidence type="ECO:0000305" key="6">
    <source>
    </source>
</evidence>
<comment type="function">
    <text evidence="1">Serine protease inhibitor.</text>
</comment>
<comment type="subcellular location">
    <subcellularLocation>
        <location evidence="6">Secreted</location>
    </subcellularLocation>
</comment>
<comment type="tissue specificity">
    <text evidence="6">Expressed by the venom gland.</text>
</comment>
<comment type="similarity">
    <text evidence="5">Belongs to the serine protease inhibitor-like (TIL domain-containing) family.</text>
</comment>
<protein>
    <recommendedName>
        <fullName evidence="4">Venom peptide BmKAPI</fullName>
    </recommendedName>
    <alternativeName>
        <fullName evidence="5">Ascaris-type protease inhibitor</fullName>
        <shortName>BmAPI</shortName>
    </alternativeName>
    <alternativeName>
        <fullName>Putative anticoagulant peptide BmAP1</fullName>
    </alternativeName>
</protein>
<reference key="1">
    <citation type="journal article" date="2002" name="Toxicon">
        <title>Identification of BmKAPi, a novel type of scorpion venom peptide with peculiar disulfide bridge pattern from Buthus martensii Karsch.</title>
        <authorList>
            <person name="Zeng X.-C."/>
            <person name="Wang S.-X."/>
            <person name="Li W.-X."/>
        </authorList>
    </citation>
    <scope>NUCLEOTIDE SEQUENCE [MRNA]</scope>
    <source>
        <tissue>Venom gland</tissue>
    </source>
</reference>
<reference key="2">
    <citation type="journal article" date="2002" name="Comp. Biochem. Physiol.">
        <title>Precursors of three unique cysteine-rich peptides from the scorpion Buthus martensii Karsch.</title>
        <authorList>
            <person name="Zhu S.-Y."/>
            <person name="Li W.-X."/>
        </authorList>
    </citation>
    <scope>NUCLEOTIDE SEQUENCE [MRNA]</scope>
    <source>
        <tissue>Venom gland</tissue>
    </source>
</reference>
<reference key="3">
    <citation type="journal article" date="2013" name="PLoS ONE">
        <title>SjAPI, the first functionally characterized Ascaris-type protease inhibitor from animal venoms.</title>
        <authorList>
            <person name="Chen Z."/>
            <person name="Wang B."/>
            <person name="Hu J."/>
            <person name="Yang W."/>
            <person name="Cao Z."/>
            <person name="Zhuo R."/>
            <person name="Li W."/>
            <person name="Wu Y."/>
        </authorList>
    </citation>
    <scope>NUCLEOTIDE SEQUENCE [MRNA] OF 23-89</scope>
    <source>
        <tissue>Venom gland</tissue>
    </source>
</reference>
<sequence>MKFVFASFALFVIFLCFSQSLSQSYFRCRDNEVFDNCISNCGPPRCSNILNTYPCTNLGPLCTPGCKCKDGRVYDNQGRCVLQTECFQK</sequence>
<keyword id="KW-1015">Disulfide bond</keyword>
<keyword id="KW-0646">Protease inhibitor</keyword>
<keyword id="KW-0964">Secreted</keyword>
<keyword id="KW-0722">Serine protease inhibitor</keyword>
<keyword id="KW-0732">Signal</keyword>
<feature type="signal peptide" evidence="3">
    <location>
        <begin position="1"/>
        <end position="22"/>
    </location>
</feature>
<feature type="chain" id="PRO_0000034313" description="Venom peptide BmKAPI" evidence="5">
    <location>
        <begin position="23"/>
        <end position="89"/>
    </location>
</feature>
<feature type="domain" description="TIL" evidence="3">
    <location>
        <begin position="28"/>
        <end position="86"/>
    </location>
</feature>
<feature type="disulfide bond" evidence="2">
    <location>
        <begin position="28"/>
        <end position="66"/>
    </location>
</feature>
<feature type="disulfide bond" evidence="2">
    <location>
        <begin position="37"/>
        <end position="62"/>
    </location>
</feature>
<feature type="disulfide bond" evidence="2">
    <location>
        <begin position="41"/>
        <end position="55"/>
    </location>
</feature>
<feature type="disulfide bond" evidence="2">
    <location>
        <begin position="46"/>
        <end position="86"/>
    </location>
</feature>
<feature type="disulfide bond" evidence="2">
    <location>
        <begin position="68"/>
        <end position="80"/>
    </location>
</feature>
<feature type="sequence conflict" description="In Ref. 2; AAK61817." evidence="5" ref="2">
    <original>N</original>
    <variation>D</variation>
    <location>
        <position position="31"/>
    </location>
</feature>
<accession>Q86RQ7</accession>
<accession>Q95P91</accession>
<organism>
    <name type="scientific">Olivierus martensii</name>
    <name type="common">Manchurian scorpion</name>
    <name type="synonym">Mesobuthus martensii</name>
    <dbReference type="NCBI Taxonomy" id="34649"/>
    <lineage>
        <taxon>Eukaryota</taxon>
        <taxon>Metazoa</taxon>
        <taxon>Ecdysozoa</taxon>
        <taxon>Arthropoda</taxon>
        <taxon>Chelicerata</taxon>
        <taxon>Arachnida</taxon>
        <taxon>Scorpiones</taxon>
        <taxon>Buthida</taxon>
        <taxon>Buthoidea</taxon>
        <taxon>Buthidae</taxon>
        <taxon>Olivierus</taxon>
    </lineage>
</organism>